<accession>Q5ZMR9</accession>
<organism>
    <name type="scientific">Gallus gallus</name>
    <name type="common">Chicken</name>
    <dbReference type="NCBI Taxonomy" id="9031"/>
    <lineage>
        <taxon>Eukaryota</taxon>
        <taxon>Metazoa</taxon>
        <taxon>Chordata</taxon>
        <taxon>Craniata</taxon>
        <taxon>Vertebrata</taxon>
        <taxon>Euteleostomi</taxon>
        <taxon>Archelosauria</taxon>
        <taxon>Archosauria</taxon>
        <taxon>Dinosauria</taxon>
        <taxon>Saurischia</taxon>
        <taxon>Theropoda</taxon>
        <taxon>Coelurosauria</taxon>
        <taxon>Aves</taxon>
        <taxon>Neognathae</taxon>
        <taxon>Galloanserae</taxon>
        <taxon>Galliformes</taxon>
        <taxon>Phasianidae</taxon>
        <taxon>Phasianinae</taxon>
        <taxon>Gallus</taxon>
    </lineage>
</organism>
<dbReference type="EMBL" id="AJ719315">
    <property type="protein sequence ID" value="CAG30974.1"/>
    <property type="molecule type" value="mRNA"/>
</dbReference>
<dbReference type="RefSeq" id="NP_001012965.1">
    <property type="nucleotide sequence ID" value="NM_001012947.2"/>
</dbReference>
<dbReference type="SMR" id="Q5ZMR9"/>
<dbReference type="FunCoup" id="Q5ZMR9">
    <property type="interactions" value="1209"/>
</dbReference>
<dbReference type="STRING" id="9031.ENSGALP00000027623"/>
<dbReference type="PaxDb" id="9031-ENSGALP00000027623"/>
<dbReference type="GeneID" id="428081"/>
<dbReference type="KEGG" id="gga:428081"/>
<dbReference type="CTD" id="64328"/>
<dbReference type="VEuPathDB" id="HostDB:geneid_428081"/>
<dbReference type="eggNOG" id="KOG4541">
    <property type="taxonomic scope" value="Eukaryota"/>
</dbReference>
<dbReference type="InParanoid" id="Q5ZMR9"/>
<dbReference type="OrthoDB" id="5548448at2759"/>
<dbReference type="PhylomeDB" id="Q5ZMR9"/>
<dbReference type="PRO" id="PR:Q5ZMR9"/>
<dbReference type="Proteomes" id="UP000000539">
    <property type="component" value="Unassembled WGS sequence"/>
</dbReference>
<dbReference type="GO" id="GO:0005737">
    <property type="term" value="C:cytoplasm"/>
    <property type="evidence" value="ECO:0000318"/>
    <property type="project" value="GO_Central"/>
</dbReference>
<dbReference type="GO" id="GO:0005643">
    <property type="term" value="C:nuclear pore"/>
    <property type="evidence" value="ECO:0000318"/>
    <property type="project" value="GO_Central"/>
</dbReference>
<dbReference type="GO" id="GO:0005049">
    <property type="term" value="F:nuclear export signal receptor activity"/>
    <property type="evidence" value="ECO:0000318"/>
    <property type="project" value="GO_Central"/>
</dbReference>
<dbReference type="GO" id="GO:0006611">
    <property type="term" value="P:protein export from nucleus"/>
    <property type="evidence" value="ECO:0000318"/>
    <property type="project" value="GO_Central"/>
</dbReference>
<dbReference type="FunFam" id="1.25.10.10:FF:000077">
    <property type="entry name" value="Exportin 4"/>
    <property type="match status" value="1"/>
</dbReference>
<dbReference type="FunFam" id="1.25.10.10:FF:000130">
    <property type="entry name" value="Exportin 4"/>
    <property type="match status" value="1"/>
</dbReference>
<dbReference type="Gene3D" id="1.25.10.10">
    <property type="entry name" value="Leucine-rich Repeat Variant"/>
    <property type="match status" value="2"/>
</dbReference>
<dbReference type="InterPro" id="IPR011989">
    <property type="entry name" value="ARM-like"/>
</dbReference>
<dbReference type="InterPro" id="IPR016024">
    <property type="entry name" value="ARM-type_fold"/>
</dbReference>
<dbReference type="InterPro" id="IPR014877">
    <property type="entry name" value="XPO1_C_dom"/>
</dbReference>
<dbReference type="InterPro" id="IPR044189">
    <property type="entry name" value="XPO4/7-like"/>
</dbReference>
<dbReference type="PANTHER" id="PTHR12596">
    <property type="entry name" value="EXPORTIN 4,7-RELATED"/>
    <property type="match status" value="1"/>
</dbReference>
<dbReference type="PANTHER" id="PTHR12596:SF1">
    <property type="entry name" value="EXPORTIN-4"/>
    <property type="match status" value="1"/>
</dbReference>
<dbReference type="Pfam" id="PF08767">
    <property type="entry name" value="CRM1_C"/>
    <property type="match status" value="1"/>
</dbReference>
<dbReference type="SUPFAM" id="SSF48371">
    <property type="entry name" value="ARM repeat"/>
    <property type="match status" value="1"/>
</dbReference>
<gene>
    <name type="primary">XPO4</name>
    <name type="ORF">RCJMB04_1f17</name>
</gene>
<sequence length="1154" mass="130317">MMAAAAAAGGAPEVIAQLENAAKVLMAPPSMVNNEQRQHAEHIFLSFRKSKSPFAVCKHILETSKVDYVLFQAATAIMEAVVREWILLEKTSIESLRTFLLTYVLQRPNLQKYVREQILLAVAVIVKRGSLDKSIDCKSIFHEVSQLISSGNPTVQTLACSILTALLSEFSSSSKTSNIGLSMEFHGNCKRIFQEDDLRQIFMLTVEVLQEFRRRENLNAQMSSVFQRYLALANQVLSWNFLPPNLGRHYIAMFESSQNVMLKPTESWRETLLDSRVMELFFTVHRKIREDTDMAQDSLQCLAQLASLHGSVFPDEGSQVDYLAHFIEGLLNTISGIEIEDSEAVGISSIISNLITVFPRNILTAIPNELFSSFVNCLAHLTCSFGRSAALEEVLDKDDMVYMEAYDKLLESWLTLVQDDKHFHKGFFTQHAVQVFNSYIQCHLAAPDGTRNLTANGVASREEEEISELQEDDRDQFCDQLASVGMLGRIAAEHCIPLLTSLLEDRVTRLHGQLQRHQQQLLASPASGSIDNKVLDDLYEDIHWLILVTGYLLANDTQGETPLIPPEVMEYSIKHSTEVDINTTLQILGSPGEKASSIPGYNRTDSVIRLLSAILRVSEVESRAIRANLTHLLSPQMGKDIVWFLKRWAKTYLLADEKLYDQISLPFSTAFGADTEGSQWIVGYLLEKVISNLAVWSSEQDLANDTVQLLVTLVERRERANLVIQCENWWNLAKQFARRSPPLHYLSSSVQRTLMKALVLGGFAHMDTEMKQQYWTEVLQPLQQRFLNVINQENFQQICQEEEVKQEITATLEALCGIAEATQIDNVAILFNFLMDFLNNCIGLMEVYKNTPETVNLIIEVFVEVAHKQICYLGEAKAMNLYEACLTLLQVYSKNNLGRQRIDVTAEEDQYQDLLLIMELLTNLLSKEFIDFSDTDEVFRGHEPGQATNRTVSAADVVLYGVNLVLPLMSQDLLKFPSLCNQYYKLITFICEIFPEKIPQLPEDLFKSLMYSLELGMSSMSSEVCQLCLEAVTPLAEQCAKAQETDSALFLATRHFLKMVFDMLVLQKHNTEMTTAAGEAFYTLVCLHQAEYSELVETLLSTQQDPVIYQRLADAFNKLTASSTPPTLDRKQKMAFLKSLEEFMANVGGLLCVK</sequence>
<feature type="chain" id="PRO_0000237670" description="Exportin-4">
    <location>
        <begin position="1"/>
        <end position="1154"/>
    </location>
</feature>
<name>XPO4_CHICK</name>
<evidence type="ECO:0000250" key="1"/>
<evidence type="ECO:0000305" key="2"/>
<protein>
    <recommendedName>
        <fullName>Exportin-4</fullName>
    </recommendedName>
</protein>
<keyword id="KW-0963">Cytoplasm</keyword>
<keyword id="KW-0539">Nucleus</keyword>
<keyword id="KW-0653">Protein transport</keyword>
<keyword id="KW-1185">Reference proteome</keyword>
<keyword id="KW-0813">Transport</keyword>
<proteinExistence type="evidence at transcript level"/>
<reference key="1">
    <citation type="journal article" date="2005" name="Genome Biol.">
        <title>Full-length cDNAs from chicken bursal lymphocytes to facilitate gene function analysis.</title>
        <authorList>
            <person name="Caldwell R.B."/>
            <person name="Kierzek A.M."/>
            <person name="Arakawa H."/>
            <person name="Bezzubov Y."/>
            <person name="Zaim J."/>
            <person name="Fiedler P."/>
            <person name="Kutter S."/>
            <person name="Blagodatski A."/>
            <person name="Kostovska D."/>
            <person name="Koter M."/>
            <person name="Plachy J."/>
            <person name="Carninci P."/>
            <person name="Hayashizaki Y."/>
            <person name="Buerstedde J.-M."/>
        </authorList>
    </citation>
    <scope>NUCLEOTIDE SEQUENCE [LARGE SCALE MRNA]</scope>
    <source>
        <strain>CB</strain>
        <tissue>Bursa of Fabricius</tissue>
    </source>
</reference>
<comment type="function">
    <text evidence="1">Mediates the nuclear export of proteins (cargos) with broad substrate specificity.</text>
</comment>
<comment type="subcellular location">
    <subcellularLocation>
        <location evidence="1">Cytoplasm</location>
    </subcellularLocation>
    <subcellularLocation>
        <location evidence="1">Nucleus</location>
    </subcellularLocation>
</comment>
<comment type="similarity">
    <text evidence="2">Belongs to the exportin family.</text>
</comment>